<accession>A9A8Y5</accession>
<reference key="1">
    <citation type="submission" date="2007-10" db="EMBL/GenBank/DDBJ databases">
        <title>Complete sequence of Methanococcus maripaludis C6.</title>
        <authorList>
            <consortium name="US DOE Joint Genome Institute"/>
            <person name="Copeland A."/>
            <person name="Lucas S."/>
            <person name="Lapidus A."/>
            <person name="Barry K."/>
            <person name="Glavina del Rio T."/>
            <person name="Dalin E."/>
            <person name="Tice H."/>
            <person name="Pitluck S."/>
            <person name="Clum A."/>
            <person name="Schmutz J."/>
            <person name="Larimer F."/>
            <person name="Land M."/>
            <person name="Hauser L."/>
            <person name="Kyrpides N."/>
            <person name="Mikhailova N."/>
            <person name="Sieprawska-Lupa M."/>
            <person name="Whitman W.B."/>
            <person name="Richardson P."/>
        </authorList>
    </citation>
    <scope>NUCLEOTIDE SEQUENCE [LARGE SCALE GENOMIC DNA]</scope>
    <source>
        <strain>C6 / ATCC BAA-1332</strain>
    </source>
</reference>
<proteinExistence type="inferred from homology"/>
<evidence type="ECO:0000255" key="1">
    <source>
        <dbReference type="HAMAP-Rule" id="MF_00498"/>
    </source>
</evidence>
<name>Y993_METM6</name>
<gene>
    <name type="ordered locus">MmarC6_0993</name>
</gene>
<feature type="chain" id="PRO_0000378121" description="UPF0179 protein MmarC6_0993">
    <location>
        <begin position="1"/>
        <end position="145"/>
    </location>
</feature>
<sequence>MKKITLIGSELAKTGNEFIYLGPLEECEPCRFKRICHNNLDVGTRYKIVSVRSANHPCTVHENGVKVVEVMPAEFTIIIESKKALEGVTLTHSDVHCDRVCCENYLSCHPEGISGKYRVSSILPEKVECKKGNSLKKISIIPVQQ</sequence>
<protein>
    <recommendedName>
        <fullName evidence="1">UPF0179 protein MmarC6_0993</fullName>
    </recommendedName>
</protein>
<dbReference type="EMBL" id="CP000867">
    <property type="protein sequence ID" value="ABX01808.1"/>
    <property type="molecule type" value="Genomic_DNA"/>
</dbReference>
<dbReference type="STRING" id="444158.MmarC6_0993"/>
<dbReference type="KEGG" id="mmx:MmarC6_0993"/>
<dbReference type="eggNOG" id="arCOG04477">
    <property type="taxonomic scope" value="Archaea"/>
</dbReference>
<dbReference type="HOGENOM" id="CLU_121764_0_0_2"/>
<dbReference type="OrthoDB" id="24613at2157"/>
<dbReference type="PhylomeDB" id="A9A8Y5"/>
<dbReference type="HAMAP" id="MF_00498">
    <property type="entry name" value="UPF0179"/>
    <property type="match status" value="1"/>
</dbReference>
<dbReference type="InterPro" id="IPR005369">
    <property type="entry name" value="UPF0179"/>
</dbReference>
<dbReference type="PANTHER" id="PTHR40699">
    <property type="entry name" value="UPF0179 PROTEIN MJ1627"/>
    <property type="match status" value="1"/>
</dbReference>
<dbReference type="PANTHER" id="PTHR40699:SF1">
    <property type="entry name" value="UPF0179 PROTEIN MJ1627"/>
    <property type="match status" value="1"/>
</dbReference>
<dbReference type="Pfam" id="PF03684">
    <property type="entry name" value="UPF0179"/>
    <property type="match status" value="1"/>
</dbReference>
<dbReference type="PIRSF" id="PIRSF006595">
    <property type="entry name" value="UCP006595"/>
    <property type="match status" value="1"/>
</dbReference>
<organism>
    <name type="scientific">Methanococcus maripaludis (strain C6 / ATCC BAA-1332)</name>
    <dbReference type="NCBI Taxonomy" id="444158"/>
    <lineage>
        <taxon>Archaea</taxon>
        <taxon>Methanobacteriati</taxon>
        <taxon>Methanobacteriota</taxon>
        <taxon>Methanomada group</taxon>
        <taxon>Methanococci</taxon>
        <taxon>Methanococcales</taxon>
        <taxon>Methanococcaceae</taxon>
        <taxon>Methanococcus</taxon>
    </lineage>
</organism>
<comment type="similarity">
    <text evidence="1">Belongs to the UPF0179 family.</text>
</comment>